<accession>P96666</accession>
<accession>Q797I2</accession>
<keyword id="KW-1185">Reference proteome</keyword>
<protein>
    <recommendedName>
        <fullName>Uncharacterized protein YdeI</fullName>
    </recommendedName>
</protein>
<proteinExistence type="predicted"/>
<organism>
    <name type="scientific">Bacillus subtilis (strain 168)</name>
    <dbReference type="NCBI Taxonomy" id="224308"/>
    <lineage>
        <taxon>Bacteria</taxon>
        <taxon>Bacillati</taxon>
        <taxon>Bacillota</taxon>
        <taxon>Bacilli</taxon>
        <taxon>Bacillales</taxon>
        <taxon>Bacillaceae</taxon>
        <taxon>Bacillus</taxon>
    </lineage>
</organism>
<gene>
    <name type="primary">ydeI</name>
    <name type="ordered locus">BSU05210</name>
</gene>
<sequence>MTNSRTNPKVDEFLSKAKKWKEEFEKLRTIILDCELTEDFKWMHPCYTYHNKNIVLIHGFKEYCALLFHKGVLLQDTDGILIQQTENVQAARQIRFTNVQEINELENILKAYIHEAIEVEKAGLKVDVNKNIELNIPEELQNKFDEIPALKIAFEALTPGRQRAYTLYFSQAKQSKTRESRVEKYVQKILDGKGLKD</sequence>
<feature type="chain" id="PRO_0000386479" description="Uncharacterized protein YdeI">
    <location>
        <begin position="1"/>
        <end position="197"/>
    </location>
</feature>
<dbReference type="EMBL" id="AB001488">
    <property type="protein sequence ID" value="BAA19356.1"/>
    <property type="molecule type" value="Genomic_DNA"/>
</dbReference>
<dbReference type="EMBL" id="AL009126">
    <property type="protein sequence ID" value="CAB12328.1"/>
    <property type="molecule type" value="Genomic_DNA"/>
</dbReference>
<dbReference type="PIR" id="C69778">
    <property type="entry name" value="C69778"/>
</dbReference>
<dbReference type="RefSeq" id="NP_388402.1">
    <property type="nucleotide sequence ID" value="NC_000964.3"/>
</dbReference>
<dbReference type="RefSeq" id="WP_003234230.1">
    <property type="nucleotide sequence ID" value="NZ_OZ025638.1"/>
</dbReference>
<dbReference type="SMR" id="P96666"/>
<dbReference type="FunCoup" id="P96666">
    <property type="interactions" value="35"/>
</dbReference>
<dbReference type="STRING" id="224308.BSU05210"/>
<dbReference type="PaxDb" id="224308-BSU05210"/>
<dbReference type="EnsemblBacteria" id="CAB12328">
    <property type="protein sequence ID" value="CAB12328"/>
    <property type="gene ID" value="BSU_05210"/>
</dbReference>
<dbReference type="GeneID" id="939916"/>
<dbReference type="KEGG" id="bsu:BSU05210"/>
<dbReference type="PATRIC" id="fig|224308.179.peg.556"/>
<dbReference type="eggNOG" id="COG4430">
    <property type="taxonomic scope" value="Bacteria"/>
</dbReference>
<dbReference type="InParanoid" id="P96666"/>
<dbReference type="OrthoDB" id="214150at2"/>
<dbReference type="PhylomeDB" id="P96666"/>
<dbReference type="BioCyc" id="BSUB:BSU05210-MONOMER"/>
<dbReference type="Proteomes" id="UP000001570">
    <property type="component" value="Chromosome"/>
</dbReference>
<dbReference type="Gene3D" id="3.90.1150.200">
    <property type="match status" value="1"/>
</dbReference>
<dbReference type="InterPro" id="IPR016786">
    <property type="entry name" value="YdeI_bac"/>
</dbReference>
<dbReference type="InterPro" id="IPR014922">
    <property type="entry name" value="YdhG-like"/>
</dbReference>
<dbReference type="Pfam" id="PF08818">
    <property type="entry name" value="DUF1801"/>
    <property type="match status" value="1"/>
</dbReference>
<dbReference type="Pfam" id="PF13376">
    <property type="entry name" value="OmdA"/>
    <property type="match status" value="1"/>
</dbReference>
<dbReference type="PIRSF" id="PIRSF021308">
    <property type="entry name" value="UCP021308"/>
    <property type="match status" value="1"/>
</dbReference>
<dbReference type="SUPFAM" id="SSF159888">
    <property type="entry name" value="YdhG-like"/>
    <property type="match status" value="1"/>
</dbReference>
<name>YDEI_BACSU</name>
<reference key="1">
    <citation type="submission" date="1997-03" db="EMBL/GenBank/DDBJ databases">
        <title>A 148 kbp sequence of the region between 35 and 47 degree of the Bacillus subtilis genome.</title>
        <authorList>
            <person name="Kasahara Y."/>
            <person name="Nakai S."/>
            <person name="Lee S."/>
            <person name="Sadaie Y."/>
            <person name="Ogasawara N."/>
        </authorList>
    </citation>
    <scope>NUCLEOTIDE SEQUENCE [GENOMIC DNA]</scope>
    <source>
        <strain>168</strain>
    </source>
</reference>
<reference key="2">
    <citation type="journal article" date="1997" name="Nature">
        <title>The complete genome sequence of the Gram-positive bacterium Bacillus subtilis.</title>
        <authorList>
            <person name="Kunst F."/>
            <person name="Ogasawara N."/>
            <person name="Moszer I."/>
            <person name="Albertini A.M."/>
            <person name="Alloni G."/>
            <person name="Azevedo V."/>
            <person name="Bertero M.G."/>
            <person name="Bessieres P."/>
            <person name="Bolotin A."/>
            <person name="Borchert S."/>
            <person name="Borriss R."/>
            <person name="Boursier L."/>
            <person name="Brans A."/>
            <person name="Braun M."/>
            <person name="Brignell S.C."/>
            <person name="Bron S."/>
            <person name="Brouillet S."/>
            <person name="Bruschi C.V."/>
            <person name="Caldwell B."/>
            <person name="Capuano V."/>
            <person name="Carter N.M."/>
            <person name="Choi S.-K."/>
            <person name="Codani J.-J."/>
            <person name="Connerton I.F."/>
            <person name="Cummings N.J."/>
            <person name="Daniel R.A."/>
            <person name="Denizot F."/>
            <person name="Devine K.M."/>
            <person name="Duesterhoeft A."/>
            <person name="Ehrlich S.D."/>
            <person name="Emmerson P.T."/>
            <person name="Entian K.-D."/>
            <person name="Errington J."/>
            <person name="Fabret C."/>
            <person name="Ferrari E."/>
            <person name="Foulger D."/>
            <person name="Fritz C."/>
            <person name="Fujita M."/>
            <person name="Fujita Y."/>
            <person name="Fuma S."/>
            <person name="Galizzi A."/>
            <person name="Galleron N."/>
            <person name="Ghim S.-Y."/>
            <person name="Glaser P."/>
            <person name="Goffeau A."/>
            <person name="Golightly E.J."/>
            <person name="Grandi G."/>
            <person name="Guiseppi G."/>
            <person name="Guy B.J."/>
            <person name="Haga K."/>
            <person name="Haiech J."/>
            <person name="Harwood C.R."/>
            <person name="Henaut A."/>
            <person name="Hilbert H."/>
            <person name="Holsappel S."/>
            <person name="Hosono S."/>
            <person name="Hullo M.-F."/>
            <person name="Itaya M."/>
            <person name="Jones L.-M."/>
            <person name="Joris B."/>
            <person name="Karamata D."/>
            <person name="Kasahara Y."/>
            <person name="Klaerr-Blanchard M."/>
            <person name="Klein C."/>
            <person name="Kobayashi Y."/>
            <person name="Koetter P."/>
            <person name="Koningstein G."/>
            <person name="Krogh S."/>
            <person name="Kumano M."/>
            <person name="Kurita K."/>
            <person name="Lapidus A."/>
            <person name="Lardinois S."/>
            <person name="Lauber J."/>
            <person name="Lazarevic V."/>
            <person name="Lee S.-M."/>
            <person name="Levine A."/>
            <person name="Liu H."/>
            <person name="Masuda S."/>
            <person name="Mauel C."/>
            <person name="Medigue C."/>
            <person name="Medina N."/>
            <person name="Mellado R.P."/>
            <person name="Mizuno M."/>
            <person name="Moestl D."/>
            <person name="Nakai S."/>
            <person name="Noback M."/>
            <person name="Noone D."/>
            <person name="O'Reilly M."/>
            <person name="Ogawa K."/>
            <person name="Ogiwara A."/>
            <person name="Oudega B."/>
            <person name="Park S.-H."/>
            <person name="Parro V."/>
            <person name="Pohl T.M."/>
            <person name="Portetelle D."/>
            <person name="Porwollik S."/>
            <person name="Prescott A.M."/>
            <person name="Presecan E."/>
            <person name="Pujic P."/>
            <person name="Purnelle B."/>
            <person name="Rapoport G."/>
            <person name="Rey M."/>
            <person name="Reynolds S."/>
            <person name="Rieger M."/>
            <person name="Rivolta C."/>
            <person name="Rocha E."/>
            <person name="Roche B."/>
            <person name="Rose M."/>
            <person name="Sadaie Y."/>
            <person name="Sato T."/>
            <person name="Scanlan E."/>
            <person name="Schleich S."/>
            <person name="Schroeter R."/>
            <person name="Scoffone F."/>
            <person name="Sekiguchi J."/>
            <person name="Sekowska A."/>
            <person name="Seror S.J."/>
            <person name="Serror P."/>
            <person name="Shin B.-S."/>
            <person name="Soldo B."/>
            <person name="Sorokin A."/>
            <person name="Tacconi E."/>
            <person name="Takagi T."/>
            <person name="Takahashi H."/>
            <person name="Takemaru K."/>
            <person name="Takeuchi M."/>
            <person name="Tamakoshi A."/>
            <person name="Tanaka T."/>
            <person name="Terpstra P."/>
            <person name="Tognoni A."/>
            <person name="Tosato V."/>
            <person name="Uchiyama S."/>
            <person name="Vandenbol M."/>
            <person name="Vannier F."/>
            <person name="Vassarotti A."/>
            <person name="Viari A."/>
            <person name="Wambutt R."/>
            <person name="Wedler E."/>
            <person name="Wedler H."/>
            <person name="Weitzenegger T."/>
            <person name="Winters P."/>
            <person name="Wipat A."/>
            <person name="Yamamoto H."/>
            <person name="Yamane K."/>
            <person name="Yasumoto K."/>
            <person name="Yata K."/>
            <person name="Yoshida K."/>
            <person name="Yoshikawa H.-F."/>
            <person name="Zumstein E."/>
            <person name="Yoshikawa H."/>
            <person name="Danchin A."/>
        </authorList>
    </citation>
    <scope>NUCLEOTIDE SEQUENCE [LARGE SCALE GENOMIC DNA]</scope>
    <source>
        <strain>168</strain>
    </source>
</reference>